<accession>Q9KKF0</accession>
<accession>Q9KJV7</accession>
<dbReference type="EC" id="5.6.1.7" evidence="1"/>
<dbReference type="EMBL" id="AF080547">
    <property type="protein sequence ID" value="AAF73984.1"/>
    <property type="molecule type" value="Genomic_DNA"/>
</dbReference>
<dbReference type="EMBL" id="AF159449">
    <property type="protein sequence ID" value="AAF80372.1"/>
    <property type="molecule type" value="Genomic_DNA"/>
</dbReference>
<dbReference type="SMR" id="Q9KKF0"/>
<dbReference type="MoonProt" id="Q9KKF0"/>
<dbReference type="GO" id="GO:0009986">
    <property type="term" value="C:cell surface"/>
    <property type="evidence" value="ECO:0000314"/>
    <property type="project" value="CAFA"/>
</dbReference>
<dbReference type="GO" id="GO:0005737">
    <property type="term" value="C:cytoplasm"/>
    <property type="evidence" value="ECO:0000314"/>
    <property type="project" value="CAFA"/>
</dbReference>
<dbReference type="GO" id="GO:0005615">
    <property type="term" value="C:extracellular space"/>
    <property type="evidence" value="ECO:0000314"/>
    <property type="project" value="CAFA"/>
</dbReference>
<dbReference type="GO" id="GO:0009274">
    <property type="term" value="C:peptidoglycan-based cell wall"/>
    <property type="evidence" value="ECO:0000314"/>
    <property type="project" value="CAFA"/>
</dbReference>
<dbReference type="GO" id="GO:0005886">
    <property type="term" value="C:plasma membrane"/>
    <property type="evidence" value="ECO:0000314"/>
    <property type="project" value="CAFA"/>
</dbReference>
<dbReference type="GO" id="GO:0005524">
    <property type="term" value="F:ATP binding"/>
    <property type="evidence" value="ECO:0007669"/>
    <property type="project" value="UniProtKB-UniRule"/>
</dbReference>
<dbReference type="GO" id="GO:0140662">
    <property type="term" value="F:ATP-dependent protein folding chaperone"/>
    <property type="evidence" value="ECO:0007669"/>
    <property type="project" value="InterPro"/>
</dbReference>
<dbReference type="GO" id="GO:0016853">
    <property type="term" value="F:isomerase activity"/>
    <property type="evidence" value="ECO:0007669"/>
    <property type="project" value="UniProtKB-KW"/>
</dbReference>
<dbReference type="GO" id="GO:0051082">
    <property type="term" value="F:unfolded protein binding"/>
    <property type="evidence" value="ECO:0007669"/>
    <property type="project" value="UniProtKB-UniRule"/>
</dbReference>
<dbReference type="GO" id="GO:0044650">
    <property type="term" value="P:adhesion of symbiont to host cell"/>
    <property type="evidence" value="ECO:0000314"/>
    <property type="project" value="CACAO"/>
</dbReference>
<dbReference type="GO" id="GO:0042538">
    <property type="term" value="P:hyperosmotic salinity response"/>
    <property type="evidence" value="ECO:0000315"/>
    <property type="project" value="CAFA"/>
</dbReference>
<dbReference type="GO" id="GO:0042026">
    <property type="term" value="P:protein refolding"/>
    <property type="evidence" value="ECO:0007669"/>
    <property type="project" value="UniProtKB-UniRule"/>
</dbReference>
<dbReference type="GO" id="GO:0010447">
    <property type="term" value="P:response to acidic pH"/>
    <property type="evidence" value="ECO:0000315"/>
    <property type="project" value="CAFA"/>
</dbReference>
<dbReference type="GO" id="GO:0009408">
    <property type="term" value="P:response to heat"/>
    <property type="evidence" value="ECO:0000315"/>
    <property type="project" value="CAFA"/>
</dbReference>
<dbReference type="GO" id="GO:1990641">
    <property type="term" value="P:response to iron ion starvation"/>
    <property type="evidence" value="ECO:0000315"/>
    <property type="project" value="CAFA"/>
</dbReference>
<dbReference type="CDD" id="cd03344">
    <property type="entry name" value="GroEL"/>
    <property type="match status" value="1"/>
</dbReference>
<dbReference type="FunFam" id="1.10.560.10:FF:000001">
    <property type="entry name" value="60 kDa chaperonin"/>
    <property type="match status" value="1"/>
</dbReference>
<dbReference type="FunFam" id="3.50.7.10:FF:000001">
    <property type="entry name" value="60 kDa chaperonin"/>
    <property type="match status" value="1"/>
</dbReference>
<dbReference type="Gene3D" id="3.50.7.10">
    <property type="entry name" value="GroEL"/>
    <property type="match status" value="1"/>
</dbReference>
<dbReference type="Gene3D" id="1.10.560.10">
    <property type="entry name" value="GroEL-like equatorial domain"/>
    <property type="match status" value="1"/>
</dbReference>
<dbReference type="Gene3D" id="3.30.260.10">
    <property type="entry name" value="TCP-1-like chaperonin intermediate domain"/>
    <property type="match status" value="1"/>
</dbReference>
<dbReference type="HAMAP" id="MF_00600">
    <property type="entry name" value="CH60"/>
    <property type="match status" value="1"/>
</dbReference>
<dbReference type="InterPro" id="IPR018370">
    <property type="entry name" value="Chaperonin_Cpn60_CS"/>
</dbReference>
<dbReference type="InterPro" id="IPR001844">
    <property type="entry name" value="Cpn60/GroEL"/>
</dbReference>
<dbReference type="InterPro" id="IPR002423">
    <property type="entry name" value="Cpn60/GroEL/TCP-1"/>
</dbReference>
<dbReference type="InterPro" id="IPR027409">
    <property type="entry name" value="GroEL-like_apical_dom_sf"/>
</dbReference>
<dbReference type="InterPro" id="IPR027413">
    <property type="entry name" value="GROEL-like_equatorial_sf"/>
</dbReference>
<dbReference type="InterPro" id="IPR027410">
    <property type="entry name" value="TCP-1-like_intermed_sf"/>
</dbReference>
<dbReference type="NCBIfam" id="TIGR02348">
    <property type="entry name" value="GroEL"/>
    <property type="match status" value="1"/>
</dbReference>
<dbReference type="NCBIfam" id="NF000592">
    <property type="entry name" value="PRK00013.1"/>
    <property type="match status" value="1"/>
</dbReference>
<dbReference type="NCBIfam" id="NF009487">
    <property type="entry name" value="PRK12849.1"/>
    <property type="match status" value="1"/>
</dbReference>
<dbReference type="NCBIfam" id="NF009488">
    <property type="entry name" value="PRK12850.1"/>
    <property type="match status" value="1"/>
</dbReference>
<dbReference type="NCBIfam" id="NF009489">
    <property type="entry name" value="PRK12851.1"/>
    <property type="match status" value="1"/>
</dbReference>
<dbReference type="PANTHER" id="PTHR45633">
    <property type="entry name" value="60 KDA HEAT SHOCK PROTEIN, MITOCHONDRIAL"/>
    <property type="match status" value="1"/>
</dbReference>
<dbReference type="Pfam" id="PF00118">
    <property type="entry name" value="Cpn60_TCP1"/>
    <property type="match status" value="1"/>
</dbReference>
<dbReference type="PRINTS" id="PR00298">
    <property type="entry name" value="CHAPERONIN60"/>
</dbReference>
<dbReference type="SUPFAM" id="SSF52029">
    <property type="entry name" value="GroEL apical domain-like"/>
    <property type="match status" value="1"/>
</dbReference>
<dbReference type="SUPFAM" id="SSF48592">
    <property type="entry name" value="GroEL equatorial domain-like"/>
    <property type="match status" value="1"/>
</dbReference>
<dbReference type="SUPFAM" id="SSF54849">
    <property type="entry name" value="GroEL-intermediate domain like"/>
    <property type="match status" value="1"/>
</dbReference>
<dbReference type="PROSITE" id="PS00296">
    <property type="entry name" value="CHAPERONINS_CPN60"/>
    <property type="match status" value="1"/>
</dbReference>
<reference key="1">
    <citation type="journal article" date="2001" name="Microbiology">
        <title>GroEL (Hsp60) of Clostridium difficile is involved in cell adherence.</title>
        <authorList>
            <person name="Hennequin C."/>
            <person name="Porcheray F."/>
            <person name="Waligora-Dupriet A.-J."/>
            <person name="Collignon A."/>
            <person name="Barc M.-C."/>
            <person name="Bourlioux P."/>
            <person name="Karjalainen T."/>
        </authorList>
    </citation>
    <scope>NUCLEOTIDE SEQUENCE [GENOMIC DNA]</scope>
    <source>
        <strain>79-685</strain>
        <strain>ATCC 43603 / CCUG 37787 / 5036</strain>
    </source>
</reference>
<gene>
    <name evidence="1" type="primary">groEL</name>
    <name evidence="1" type="synonym">groL</name>
</gene>
<evidence type="ECO:0000255" key="1">
    <source>
        <dbReference type="HAMAP-Rule" id="MF_00600"/>
    </source>
</evidence>
<sequence length="540" mass="57677">MAKEIKFSEETRRALEAGVNKLADTVKVTLGPKGRNVILDKKFGSPLITNDGVTIAKEIELEDRFENMGAQLVKEVATKTNDVAGDGTTTATVLAQAIIREGLKNVTAGANPILLRKGIQKAVTVAVEELKNQSRIVETQEAISQVASISAGDEEVGKLIAEAMEIVGKDGVITVEESQTMNTELDAVEGMQFDRGFVSAYMVTDVDKMEAVLNDPYILITDKKISNIQELLPVLEQIVQQGKKLLIIAEDVEGEALSTLVVNKLRGTFDVVAVKAPGFGDRRKEMLQDIAILTGAQVISEELGYDLKEADLSMLGRASSVKVTKESTTIVDGSGDKKAIEDRVTQIKHQVEQTTSDFDREKLMERLAKLAGGVAVVKVGAATEVELKERKLRIEDALNATRAAVEEGIVAGGGTAFVSVIPAIGTLIESLEGEVKLGAQIVKKALEEPLRQIAINAGLEGAVIVQNVVNSEAETGFDALNEKYVNMIEAGIVDPTKVSRSALQNAASIASTFLTTEAAVADLPEKEDAGMPGTGMDGMY</sequence>
<feature type="chain" id="PRO_0000063340" description="Chaperonin GroEL">
    <location>
        <begin position="1"/>
        <end position="540"/>
    </location>
</feature>
<feature type="binding site" evidence="1">
    <location>
        <begin position="29"/>
        <end position="32"/>
    </location>
    <ligand>
        <name>ATP</name>
        <dbReference type="ChEBI" id="CHEBI:30616"/>
    </ligand>
</feature>
<feature type="binding site" evidence="1">
    <location>
        <begin position="86"/>
        <end position="90"/>
    </location>
    <ligand>
        <name>ATP</name>
        <dbReference type="ChEBI" id="CHEBI:30616"/>
    </ligand>
</feature>
<feature type="binding site" evidence="1">
    <location>
        <position position="413"/>
    </location>
    <ligand>
        <name>ATP</name>
        <dbReference type="ChEBI" id="CHEBI:30616"/>
    </ligand>
</feature>
<feature type="binding site" evidence="1">
    <location>
        <begin position="478"/>
        <end position="480"/>
    </location>
    <ligand>
        <name>ATP</name>
        <dbReference type="ChEBI" id="CHEBI:30616"/>
    </ligand>
</feature>
<feature type="binding site" evidence="1">
    <location>
        <position position="494"/>
    </location>
    <ligand>
        <name>ATP</name>
        <dbReference type="ChEBI" id="CHEBI:30616"/>
    </ligand>
</feature>
<feature type="sequence variant" description="In strain: ATCC 43603.">
    <original>N</original>
    <variation>K</variation>
    <location>
        <position position="214"/>
    </location>
</feature>
<feature type="sequence variant" description="In strain: ATCC 43603.">
    <original>L</original>
    <variation>V</variation>
    <location>
        <position position="235"/>
    </location>
</feature>
<feature type="sequence variant" description="In strain: ATCC 43603.">
    <original>S</original>
    <variation>N</variation>
    <location>
        <position position="327"/>
    </location>
</feature>
<feature type="sequence variant" description="In strain: ATCC 43603.">
    <original>A</original>
    <variation>S</variation>
    <location>
        <position position="339"/>
    </location>
</feature>
<keyword id="KW-0067">ATP-binding</keyword>
<keyword id="KW-0143">Chaperone</keyword>
<keyword id="KW-0963">Cytoplasm</keyword>
<keyword id="KW-0413">Isomerase</keyword>
<keyword id="KW-0547">Nucleotide-binding</keyword>
<name>CH60_CLODI</name>
<protein>
    <recommendedName>
        <fullName evidence="1">Chaperonin GroEL</fullName>
        <ecNumber evidence="1">5.6.1.7</ecNumber>
    </recommendedName>
    <alternativeName>
        <fullName evidence="1">60 kDa chaperonin</fullName>
    </alternativeName>
    <alternativeName>
        <fullName evidence="1">Chaperonin-60</fullName>
        <shortName evidence="1">Cpn60</shortName>
    </alternativeName>
</protein>
<organism>
    <name type="scientific">Clostridioides difficile</name>
    <name type="common">Peptoclostridium difficile</name>
    <dbReference type="NCBI Taxonomy" id="1496"/>
    <lineage>
        <taxon>Bacteria</taxon>
        <taxon>Bacillati</taxon>
        <taxon>Bacillota</taxon>
        <taxon>Clostridia</taxon>
        <taxon>Peptostreptococcales</taxon>
        <taxon>Peptostreptococcaceae</taxon>
        <taxon>Clostridioides</taxon>
    </lineage>
</organism>
<comment type="function">
    <text evidence="1">Together with its co-chaperonin GroES, plays an essential role in assisting protein folding. The GroEL-GroES system forms a nano-cage that allows encapsulation of the non-native substrate proteins and provides a physical environment optimized to promote and accelerate protein folding.</text>
</comment>
<comment type="catalytic activity">
    <reaction evidence="1">
        <text>ATP + H2O + a folded polypeptide = ADP + phosphate + an unfolded polypeptide.</text>
        <dbReference type="EC" id="5.6.1.7"/>
    </reaction>
</comment>
<comment type="subunit">
    <text evidence="1">Forms a cylinder of 14 subunits composed of two heptameric rings stacked back-to-back. Interacts with the co-chaperonin GroES.</text>
</comment>
<comment type="subcellular location">
    <subcellularLocation>
        <location evidence="1">Cytoplasm</location>
    </subcellularLocation>
</comment>
<comment type="similarity">
    <text evidence="1">Belongs to the chaperonin (HSP60) family.</text>
</comment>
<proteinExistence type="inferred from homology"/>